<sequence length="450" mass="49960">MRECISIHVGQAGVQIGNACWELYCLEHGIQPDGQMPSDKTIGGGDDSFNTFFSETGAGKHVPRAVFVDLEPTVVDEVRTGTYRQLFHPEQLITGKEDAANNYARGHYTIGKEIVDLVLDRIRKLADLCTGLQGFLIFHSFGGGTGSGFASLLMERLSVDYGKKSKLEFAIYPAPQVSTAVVEPYNSILTTHTTLEHSDCAFMVDNEAIYDICRRNLDIERPTYTNLNRLIGQIVSSITASLRFDGALNVDLTEFQTNLVPYPRIHFPLATYAPVISAEKAYHEQLSVAEITNACFEPANQMVKCDPRHGKYMACCMLYRGDVVPKDVNAAIATIKTKRTIQFVDWCPTGFKVGINYQPPTVVPGGDLAKVQRAVCMLSNTTAIAEAWARLDHKFDLMYAKRAFVHWYVGEGMEEGEFSEAREDLAALEKDYEEVGVDSVEAEAEEGEEY</sequence>
<gene>
    <name type="primary">TUBA3C</name>
    <name type="synonym">TUBA2</name>
</gene>
<proteinExistence type="evidence at protein level"/>
<feature type="chain" id="PRO_0000048110" description="Tubulin alpha-3C chain">
    <location>
        <begin position="1"/>
        <end position="450"/>
    </location>
</feature>
<feature type="chain" id="PRO_0000437399" description="Detyrosinated tubulin alpha-3C chain" evidence="18 19">
    <location>
        <begin position="1"/>
        <end position="449"/>
    </location>
</feature>
<feature type="short sequence motif" description="MREC motif" evidence="3">
    <location>
        <begin position="1"/>
        <end position="4"/>
    </location>
</feature>
<feature type="active site" evidence="3">
    <location>
        <position position="254"/>
    </location>
</feature>
<feature type="binding site" evidence="3">
    <location>
        <position position="11"/>
    </location>
    <ligand>
        <name>GTP</name>
        <dbReference type="ChEBI" id="CHEBI:37565"/>
    </ligand>
</feature>
<feature type="binding site" evidence="3">
    <location>
        <position position="71"/>
    </location>
    <ligand>
        <name>GTP</name>
        <dbReference type="ChEBI" id="CHEBI:37565"/>
    </ligand>
</feature>
<feature type="binding site" evidence="3">
    <location>
        <position position="71"/>
    </location>
    <ligand>
        <name>Mg(2+)</name>
        <dbReference type="ChEBI" id="CHEBI:18420"/>
    </ligand>
</feature>
<feature type="binding site" evidence="3">
    <location>
        <position position="140"/>
    </location>
    <ligand>
        <name>GTP</name>
        <dbReference type="ChEBI" id="CHEBI:37565"/>
    </ligand>
</feature>
<feature type="binding site" evidence="3">
    <location>
        <position position="144"/>
    </location>
    <ligand>
        <name>GTP</name>
        <dbReference type="ChEBI" id="CHEBI:37565"/>
    </ligand>
</feature>
<feature type="binding site" evidence="3">
    <location>
        <position position="145"/>
    </location>
    <ligand>
        <name>GTP</name>
        <dbReference type="ChEBI" id="CHEBI:37565"/>
    </ligand>
</feature>
<feature type="binding site" evidence="3">
    <location>
        <position position="179"/>
    </location>
    <ligand>
        <name>GTP</name>
        <dbReference type="ChEBI" id="CHEBI:37565"/>
    </ligand>
</feature>
<feature type="binding site" evidence="3">
    <location>
        <position position="206"/>
    </location>
    <ligand>
        <name>GTP</name>
        <dbReference type="ChEBI" id="CHEBI:37565"/>
    </ligand>
</feature>
<feature type="binding site" evidence="3">
    <location>
        <position position="228"/>
    </location>
    <ligand>
        <name>GTP</name>
        <dbReference type="ChEBI" id="CHEBI:37565"/>
    </ligand>
</feature>
<feature type="site" description="Involved in polymerization">
    <location>
        <position position="450"/>
    </location>
</feature>
<feature type="modified residue" description="N6-acetyllysine" evidence="8">
    <location>
        <position position="40"/>
    </location>
</feature>
<feature type="modified residue" description="3'-nitrotyrosine" evidence="5">
    <location>
        <position position="282"/>
    </location>
</feature>
<feature type="modified residue" description="Phosphoserine" evidence="5">
    <location>
        <position position="439"/>
    </location>
</feature>
<feature type="modified residue" description="3'-nitrotyrosine" evidence="7">
    <location>
        <position position="450"/>
    </location>
</feature>
<feature type="splice variant" id="VSP_006678" description="In isoform 2." evidence="15">
    <location>
        <begin position="393"/>
        <end position="424"/>
    </location>
</feature>
<feature type="sequence variant" id="VAR_034541" description="In dbSNP:rs36215077.">
    <original>V</original>
    <variation>L</variation>
    <location>
        <position position="75"/>
    </location>
</feature>
<feature type="sequence variant" id="VAR_052666" description="In dbSNP:rs17076703.">
    <original>D</original>
    <variation>V</variation>
    <location>
        <position position="392"/>
    </location>
</feature>
<feature type="sequence variant" id="VAR_022068" description="In dbSNP:rs1803092.">
    <original>V</original>
    <variation>M</variation>
    <location>
        <position position="440"/>
    </location>
</feature>
<name>TBA3C_HUMAN</name>
<protein>
    <recommendedName>
        <fullName>Tubulin alpha-3C chain</fullName>
        <ecNumber evidence="3">3.6.5.-</ecNumber>
    </recommendedName>
    <alternativeName>
        <fullName>Alpha-tubulin 2</fullName>
    </alternativeName>
    <alternativeName>
        <fullName>Alpha-tubulin 3C</fullName>
    </alternativeName>
    <alternativeName>
        <fullName>Tubulin alpha-2 chain</fullName>
    </alternativeName>
    <component>
        <recommendedName>
            <fullName>Detyrosinated tubulin alpha-3C chain</fullName>
        </recommendedName>
    </component>
</protein>
<evidence type="ECO:0000250" key="1">
    <source>
        <dbReference type="UniProtKB" id="P05214"/>
    </source>
</evidence>
<evidence type="ECO:0000250" key="2">
    <source>
        <dbReference type="UniProtKB" id="P07437"/>
    </source>
</evidence>
<evidence type="ECO:0000250" key="3">
    <source>
        <dbReference type="UniProtKB" id="P68363"/>
    </source>
</evidence>
<evidence type="ECO:0000250" key="4">
    <source>
        <dbReference type="UniProtKB" id="P68369"/>
    </source>
</evidence>
<evidence type="ECO:0000250" key="5">
    <source>
        <dbReference type="UniProtKB" id="P68373"/>
    </source>
</evidence>
<evidence type="ECO:0000250" key="6">
    <source>
        <dbReference type="UniProtKB" id="P99024"/>
    </source>
</evidence>
<evidence type="ECO:0000250" key="7">
    <source>
        <dbReference type="UniProtKB" id="Q71U36"/>
    </source>
</evidence>
<evidence type="ECO:0000269" key="8">
    <source>
    </source>
</evidence>
<evidence type="ECO:0000269" key="9">
    <source>
    </source>
</evidence>
<evidence type="ECO:0000269" key="10">
    <source>
    </source>
</evidence>
<evidence type="ECO:0000269" key="11">
    <source>
    </source>
</evidence>
<evidence type="ECO:0000269" key="12">
    <source>
    </source>
</evidence>
<evidence type="ECO:0000269" key="13">
    <source>
    </source>
</evidence>
<evidence type="ECO:0000269" key="14">
    <source ref="5"/>
</evidence>
<evidence type="ECO:0000303" key="15">
    <source>
    </source>
</evidence>
<evidence type="ECO:0000305" key="16"/>
<evidence type="ECO:0000305" key="17">
    <source>
    </source>
</evidence>
<evidence type="ECO:0000305" key="18">
    <source>
    </source>
</evidence>
<evidence type="ECO:0000305" key="19">
    <source>
    </source>
</evidence>
<dbReference type="EC" id="3.6.5.-" evidence="3"/>
<dbReference type="EMBL" id="AF005392">
    <property type="protein sequence ID" value="AAC39578.1"/>
    <property type="molecule type" value="Genomic_DNA"/>
</dbReference>
<dbReference type="EMBL" id="AL139327">
    <property type="status" value="NOT_ANNOTATED_CDS"/>
    <property type="molecule type" value="Genomic_DNA"/>
</dbReference>
<dbReference type="EMBL" id="CH471075">
    <property type="protein sequence ID" value="EAX08210.1"/>
    <property type="molecule type" value="Genomic_DNA"/>
</dbReference>
<dbReference type="EMBL" id="BC011721">
    <property type="protein sequence ID" value="AAH11721.1"/>
    <property type="molecule type" value="mRNA"/>
</dbReference>
<dbReference type="EMBL" id="L11645">
    <property type="protein sequence ID" value="AAA35521.1"/>
    <property type="molecule type" value="mRNA"/>
</dbReference>
<dbReference type="CCDS" id="CCDS9284.1">
    <molecule id="P0DPH7-1"/>
</dbReference>
<dbReference type="RefSeq" id="NP_005992.1">
    <molecule id="P0DPH7-1"/>
    <property type="nucleotide sequence ID" value="NM_006001.3"/>
</dbReference>
<dbReference type="SMR" id="P0DPH7"/>
<dbReference type="FunCoup" id="P0DPH7">
    <property type="interactions" value="810"/>
</dbReference>
<dbReference type="STRING" id="9606.ENSP00000326042"/>
<dbReference type="BindingDB" id="P0DPH7"/>
<dbReference type="ChEMBL" id="CHEMBL2095182"/>
<dbReference type="DrugBank" id="DB09130">
    <property type="generic name" value="Copper"/>
</dbReference>
<dbReference type="DrugBank" id="DB05147">
    <property type="generic name" value="CYT997"/>
</dbReference>
<dbReference type="DrugBank" id="DB01873">
    <property type="generic name" value="Epothilone D"/>
</dbReference>
<dbReference type="DrugBank" id="DB03010">
    <property type="generic name" value="Patupilone"/>
</dbReference>
<dbReference type="DrugBank" id="DB12695">
    <property type="generic name" value="Phenethyl Isothiocyanate"/>
</dbReference>
<dbReference type="GlyGen" id="P0DPH7">
    <property type="glycosylation" value="1 site, 1 O-linked glycan (1 site)"/>
</dbReference>
<dbReference type="iPTMnet" id="P0DPH7"/>
<dbReference type="PhosphoSitePlus" id="P0DPH7"/>
<dbReference type="jPOST" id="P0DPH7"/>
<dbReference type="MassIVE" id="P0DPH7"/>
<dbReference type="PaxDb" id="9606-ENSP00000326042"/>
<dbReference type="PeptideAtlas" id="P0DPH7"/>
<dbReference type="Pumba" id="P0DPH7"/>
<dbReference type="Antibodypedia" id="22219">
    <property type="antibodies" value="155 antibodies from 24 providers"/>
</dbReference>
<dbReference type="DNASU" id="7278"/>
<dbReference type="Ensembl" id="ENST00000400113.8">
    <molecule id="P0DPH7-1"/>
    <property type="protein sequence ID" value="ENSP00000382982.3"/>
    <property type="gene ID" value="ENSG00000198033.13"/>
</dbReference>
<dbReference type="GeneID" id="7278"/>
<dbReference type="KEGG" id="hsa:113457"/>
<dbReference type="KEGG" id="hsa:7278"/>
<dbReference type="MANE-Select" id="ENST00000400113.8">
    <property type="protein sequence ID" value="ENSP00000382982.3"/>
    <property type="RefSeq nucleotide sequence ID" value="NM_006001.3"/>
    <property type="RefSeq protein sequence ID" value="NP_005992.1"/>
</dbReference>
<dbReference type="AGR" id="HGNC:12408"/>
<dbReference type="CTD" id="7278"/>
<dbReference type="DisGeNET" id="7278"/>
<dbReference type="GeneCards" id="TUBA3C"/>
<dbReference type="HGNC" id="HGNC:12408">
    <property type="gene designation" value="TUBA3C"/>
</dbReference>
<dbReference type="HPA" id="ENSG00000198033">
    <property type="expression patterns" value="Tissue enriched (testis)"/>
</dbReference>
<dbReference type="MIM" id="602528">
    <property type="type" value="gene"/>
</dbReference>
<dbReference type="neXtProt" id="NX_P0DPH7"/>
<dbReference type="OpenTargets" id="ENSG00000075886"/>
<dbReference type="OpenTargets" id="ENSG00000198033"/>
<dbReference type="VEuPathDB" id="HostDB:ENSG00000198033"/>
<dbReference type="InParanoid" id="P0DPH7"/>
<dbReference type="OMA" id="VIDANCT"/>
<dbReference type="OrthoDB" id="9515037at2759"/>
<dbReference type="PAN-GO" id="P0DPH7">
    <property type="GO annotations" value="6 GO annotations based on evolutionary models"/>
</dbReference>
<dbReference type="PathwayCommons" id="P0DPH7"/>
<dbReference type="Reactome" id="R-HSA-1445148">
    <property type="pathway name" value="Translocation of SLC2A4 (GLUT4) to the plasma membrane"/>
</dbReference>
<dbReference type="Reactome" id="R-HSA-190840">
    <property type="pathway name" value="Microtubule-dependent trafficking of connexons from Golgi to the plasma membrane"/>
</dbReference>
<dbReference type="Reactome" id="R-HSA-190861">
    <property type="pathway name" value="Gap junction assembly"/>
</dbReference>
<dbReference type="Reactome" id="R-HSA-2132295">
    <property type="pathway name" value="MHC class II antigen presentation"/>
</dbReference>
<dbReference type="Reactome" id="R-HSA-2467813">
    <property type="pathway name" value="Separation of Sister Chromatids"/>
</dbReference>
<dbReference type="Reactome" id="R-HSA-2500257">
    <property type="pathway name" value="Resolution of Sister Chromatid Cohesion"/>
</dbReference>
<dbReference type="Reactome" id="R-HSA-3371497">
    <property type="pathway name" value="HSP90 chaperone cycle for steroid hormone receptors (SHR) in the presence of ligand"/>
</dbReference>
<dbReference type="Reactome" id="R-HSA-380320">
    <property type="pathway name" value="Recruitment of NuMA to mitotic centrosomes"/>
</dbReference>
<dbReference type="Reactome" id="R-HSA-389957">
    <property type="pathway name" value="Prefoldin mediated transfer of substrate to CCT/TriC"/>
</dbReference>
<dbReference type="Reactome" id="R-HSA-389960">
    <property type="pathway name" value="Formation of tubulin folding intermediates by CCT/TriC"/>
</dbReference>
<dbReference type="Reactome" id="R-HSA-389977">
    <property type="pathway name" value="Post-chaperonin tubulin folding pathway"/>
</dbReference>
<dbReference type="Reactome" id="R-HSA-437239">
    <property type="pathway name" value="Recycling pathway of L1"/>
</dbReference>
<dbReference type="Reactome" id="R-HSA-5610787">
    <property type="pathway name" value="Hedgehog 'off' state"/>
</dbReference>
<dbReference type="Reactome" id="R-HSA-5617833">
    <property type="pathway name" value="Cilium Assembly"/>
</dbReference>
<dbReference type="Reactome" id="R-HSA-5620924">
    <property type="pathway name" value="Intraflagellar transport"/>
</dbReference>
<dbReference type="Reactome" id="R-HSA-5626467">
    <property type="pathway name" value="RHO GTPases activate IQGAPs"/>
</dbReference>
<dbReference type="Reactome" id="R-HSA-5663220">
    <property type="pathway name" value="RHO GTPases Activate Formins"/>
</dbReference>
<dbReference type="Reactome" id="R-HSA-6807878">
    <property type="pathway name" value="COPI-mediated anterograde transport"/>
</dbReference>
<dbReference type="Reactome" id="R-HSA-6811434">
    <property type="pathway name" value="COPI-dependent Golgi-to-ER retrograde traffic"/>
</dbReference>
<dbReference type="Reactome" id="R-HSA-6811436">
    <property type="pathway name" value="COPI-independent Golgi-to-ER retrograde traffic"/>
</dbReference>
<dbReference type="Reactome" id="R-HSA-68877">
    <property type="pathway name" value="Mitotic Prometaphase"/>
</dbReference>
<dbReference type="Reactome" id="R-HSA-8852276">
    <property type="pathway name" value="The role of GTSE1 in G2/M progression after G2 checkpoint"/>
</dbReference>
<dbReference type="Reactome" id="R-HSA-8955332">
    <property type="pathway name" value="Carboxyterminal post-translational modifications of tubulin"/>
</dbReference>
<dbReference type="Reactome" id="R-HSA-9609690">
    <property type="pathway name" value="HCMV Early Events"/>
</dbReference>
<dbReference type="Reactome" id="R-HSA-9609736">
    <property type="pathway name" value="Assembly and cell surface presentation of NMDA receptors"/>
</dbReference>
<dbReference type="Reactome" id="R-HSA-9619483">
    <property type="pathway name" value="Activation of AMPK downstream of NMDARs"/>
</dbReference>
<dbReference type="Reactome" id="R-HSA-9646399">
    <property type="pathway name" value="Aggrephagy"/>
</dbReference>
<dbReference type="Reactome" id="R-HSA-9648025">
    <property type="pathway name" value="EML4 and NUDC in mitotic spindle formation"/>
</dbReference>
<dbReference type="Reactome" id="R-HSA-9668328">
    <property type="pathway name" value="Sealing of the nuclear envelope (NE) by ESCRT-III"/>
</dbReference>
<dbReference type="Reactome" id="R-HSA-983189">
    <property type="pathway name" value="Kinesins"/>
</dbReference>
<dbReference type="Reactome" id="R-HSA-9833482">
    <property type="pathway name" value="PKR-mediated signaling"/>
</dbReference>
<dbReference type="SignaLink" id="P0DPH7"/>
<dbReference type="SIGNOR" id="P0DPH7"/>
<dbReference type="Pharos" id="P0DPH7">
    <property type="development level" value="Tchem"/>
</dbReference>
<dbReference type="PRO" id="PR:P0DPH7"/>
<dbReference type="Proteomes" id="UP000005640">
    <property type="component" value="Chromosome 13"/>
</dbReference>
<dbReference type="Bgee" id="ENSG00000198033">
    <property type="expression patterns" value="Expressed in right testis and 167 other cell types or tissues"/>
</dbReference>
<dbReference type="ExpressionAtlas" id="P0DPH7">
    <property type="expression patterns" value="baseline and differential"/>
</dbReference>
<dbReference type="GO" id="GO:0005929">
    <property type="term" value="C:cilium"/>
    <property type="evidence" value="ECO:0000314"/>
    <property type="project" value="HPA"/>
</dbReference>
<dbReference type="GO" id="GO:0005737">
    <property type="term" value="C:cytoplasm"/>
    <property type="evidence" value="ECO:0000318"/>
    <property type="project" value="GO_Central"/>
</dbReference>
<dbReference type="GO" id="GO:0005874">
    <property type="term" value="C:microtubule"/>
    <property type="evidence" value="ECO:0000318"/>
    <property type="project" value="GO_Central"/>
</dbReference>
<dbReference type="GO" id="GO:0015630">
    <property type="term" value="C:microtubule cytoskeleton"/>
    <property type="evidence" value="ECO:0000314"/>
    <property type="project" value="HPA"/>
</dbReference>
<dbReference type="GO" id="GO:0005634">
    <property type="term" value="C:nucleus"/>
    <property type="evidence" value="ECO:0007005"/>
    <property type="project" value="UniProtKB"/>
</dbReference>
<dbReference type="GO" id="GO:0005525">
    <property type="term" value="F:GTP binding"/>
    <property type="evidence" value="ECO:0000318"/>
    <property type="project" value="GO_Central"/>
</dbReference>
<dbReference type="GO" id="GO:0016787">
    <property type="term" value="F:hydrolase activity"/>
    <property type="evidence" value="ECO:0007669"/>
    <property type="project" value="UniProtKB-KW"/>
</dbReference>
<dbReference type="GO" id="GO:0046872">
    <property type="term" value="F:metal ion binding"/>
    <property type="evidence" value="ECO:0007669"/>
    <property type="project" value="UniProtKB-KW"/>
</dbReference>
<dbReference type="GO" id="GO:0005200">
    <property type="term" value="F:structural constituent of cytoskeleton"/>
    <property type="evidence" value="ECO:0000318"/>
    <property type="project" value="GO_Central"/>
</dbReference>
<dbReference type="GO" id="GO:0000226">
    <property type="term" value="P:microtubule cytoskeleton organization"/>
    <property type="evidence" value="ECO:0000318"/>
    <property type="project" value="GO_Central"/>
</dbReference>
<dbReference type="GO" id="GO:0000278">
    <property type="term" value="P:mitotic cell cycle"/>
    <property type="evidence" value="ECO:0000318"/>
    <property type="project" value="GO_Central"/>
</dbReference>
<dbReference type="CDD" id="cd02186">
    <property type="entry name" value="alpha_tubulin"/>
    <property type="match status" value="1"/>
</dbReference>
<dbReference type="FunFam" id="1.10.287.600:FF:000005">
    <property type="entry name" value="Tubulin alpha chain"/>
    <property type="match status" value="1"/>
</dbReference>
<dbReference type="FunFam" id="3.30.1330.20:FF:000001">
    <property type="entry name" value="Tubulin alpha chain"/>
    <property type="match status" value="1"/>
</dbReference>
<dbReference type="FunFam" id="3.40.50.1440:FF:000002">
    <property type="entry name" value="Tubulin alpha chain"/>
    <property type="match status" value="1"/>
</dbReference>
<dbReference type="Gene3D" id="1.10.287.600">
    <property type="entry name" value="Helix hairpin bin"/>
    <property type="match status" value="1"/>
</dbReference>
<dbReference type="Gene3D" id="3.30.1330.20">
    <property type="entry name" value="Tubulin/FtsZ, C-terminal domain"/>
    <property type="match status" value="1"/>
</dbReference>
<dbReference type="Gene3D" id="3.40.50.1440">
    <property type="entry name" value="Tubulin/FtsZ, GTPase domain"/>
    <property type="match status" value="1"/>
</dbReference>
<dbReference type="InterPro" id="IPR002452">
    <property type="entry name" value="Alpha_tubulin"/>
</dbReference>
<dbReference type="InterPro" id="IPR008280">
    <property type="entry name" value="Tub_FtsZ_C"/>
</dbReference>
<dbReference type="InterPro" id="IPR000217">
    <property type="entry name" value="Tubulin"/>
</dbReference>
<dbReference type="InterPro" id="IPR037103">
    <property type="entry name" value="Tubulin/FtsZ-like_C"/>
</dbReference>
<dbReference type="InterPro" id="IPR018316">
    <property type="entry name" value="Tubulin/FtsZ_2-layer-sand-dom"/>
</dbReference>
<dbReference type="InterPro" id="IPR036525">
    <property type="entry name" value="Tubulin/FtsZ_GTPase_sf"/>
</dbReference>
<dbReference type="InterPro" id="IPR023123">
    <property type="entry name" value="Tubulin_C"/>
</dbReference>
<dbReference type="InterPro" id="IPR017975">
    <property type="entry name" value="Tubulin_CS"/>
</dbReference>
<dbReference type="InterPro" id="IPR003008">
    <property type="entry name" value="Tubulin_FtsZ_GTPase"/>
</dbReference>
<dbReference type="PANTHER" id="PTHR11588">
    <property type="entry name" value="TUBULIN"/>
    <property type="match status" value="1"/>
</dbReference>
<dbReference type="Pfam" id="PF00091">
    <property type="entry name" value="Tubulin"/>
    <property type="match status" value="1"/>
</dbReference>
<dbReference type="Pfam" id="PF03953">
    <property type="entry name" value="Tubulin_C"/>
    <property type="match status" value="1"/>
</dbReference>
<dbReference type="PRINTS" id="PR01162">
    <property type="entry name" value="ALPHATUBULIN"/>
</dbReference>
<dbReference type="PRINTS" id="PR01161">
    <property type="entry name" value="TUBULIN"/>
</dbReference>
<dbReference type="SMART" id="SM00864">
    <property type="entry name" value="Tubulin"/>
    <property type="match status" value="1"/>
</dbReference>
<dbReference type="SMART" id="SM00865">
    <property type="entry name" value="Tubulin_C"/>
    <property type="match status" value="1"/>
</dbReference>
<dbReference type="SUPFAM" id="SSF55307">
    <property type="entry name" value="Tubulin C-terminal domain-like"/>
    <property type="match status" value="1"/>
</dbReference>
<dbReference type="SUPFAM" id="SSF52490">
    <property type="entry name" value="Tubulin nucleotide-binding domain-like"/>
    <property type="match status" value="1"/>
</dbReference>
<dbReference type="PROSITE" id="PS00227">
    <property type="entry name" value="TUBULIN"/>
    <property type="match status" value="1"/>
</dbReference>
<comment type="function">
    <text>Tubulin is the major constituent of microtubules, a cylinder consisting of laterally associated linear protofilaments composed of alpha- and beta-tubulin heterodimers. Microtubules grow by the addition of GTP-tubulin dimers to the microtubule end, where a stabilizing cap forms. Below the cap, tubulin dimers are in GDP-bound state, owing to GTPase activity of alpha-tubulin.</text>
</comment>
<comment type="catalytic activity">
    <reaction evidence="3">
        <text>GTP + H2O = GDP + phosphate + H(+)</text>
        <dbReference type="Rhea" id="RHEA:19669"/>
        <dbReference type="ChEBI" id="CHEBI:15377"/>
        <dbReference type="ChEBI" id="CHEBI:15378"/>
        <dbReference type="ChEBI" id="CHEBI:37565"/>
        <dbReference type="ChEBI" id="CHEBI:43474"/>
        <dbReference type="ChEBI" id="CHEBI:58189"/>
    </reaction>
    <physiologicalReaction direction="left-to-right" evidence="3">
        <dbReference type="Rhea" id="RHEA:19670"/>
    </physiologicalReaction>
</comment>
<comment type="cofactor">
    <cofactor evidence="3">
        <name>Mg(2+)</name>
        <dbReference type="ChEBI" id="CHEBI:18420"/>
    </cofactor>
</comment>
<comment type="subunit">
    <text>Dimer of alpha and beta chains. A typical microtubule is a hollow water-filled tube with an outer diameter of 25 nm and an inner diameter of 15 nM. Alpha-beta heterodimers associate head-to-tail to form protofilaments running lengthwise along the microtubule wall with the beta-tubulin subunit facing the microtubule plus end conferring a structural polarity. Microtubules usually have 13 protofilaments but different protofilament numbers can be found in some organisms and specialized cells.</text>
</comment>
<comment type="subcellular location">
    <subcellularLocation>
        <location>Cytoplasm</location>
        <location>Cytoskeleton</location>
    </subcellularLocation>
</comment>
<comment type="alternative products">
    <event type="alternative splicing"/>
    <isoform>
        <id>P0DPH7-1</id>
        <name>1</name>
        <sequence type="displayed"/>
    </isoform>
    <isoform>
        <id>P0DPH7-2</id>
        <name>2</name>
        <sequence type="described" ref="VSP_006678"/>
    </isoform>
</comment>
<comment type="tissue specificity">
    <text evidence="14">Expressed in testis.</text>
</comment>
<comment type="domain">
    <text evidence="3">The MREC motif may be critical for tubulin autoregulation.</text>
</comment>
<comment type="PTM">
    <text evidence="6 10">Some glutamate residues at the C-terminus are polyglutamylated, resulting in polyglutamate chains on the gamma-carboxyl group (PubMed:26875866). Polyglutamylation plays a key role in microtubule severing by spastin (SPAST). SPAST preferentially recognizes and acts on microtubules decorated with short polyglutamate tails: severing activity by SPAST increases as the number of glutamates per tubulin rises from one to eight, but decreases beyond this glutamylation threshold (PubMed:26875866). Glutamylation is also involved in cilia motility (By similarity).</text>
</comment>
<comment type="PTM">
    <text evidence="2 17">Some glutamate residues at the C-terminus are monoglycylated but not polyglycylated due to the absence of functional TTLL10 in human. Monoglycylation is mainly limited to tubulin incorporated into cilia and flagella axonemes, which is required for their stability and maintenance. Flagella glycylation controls sperm motility. Both polyglutamylation and monoglycylation can coexist on the same protein on adjacent residues, and lowering glycylation levels increases polyglutamylation, and reciprocally.</text>
</comment>
<comment type="PTM">
    <text evidence="8">Acetylation of alpha chains at Lys-40 is located inside the microtubule lumen. This modification has been correlated with increased microtubule stability, intracellular transport and ciliary assembly.</text>
</comment>
<comment type="PTM">
    <text evidence="3">Methylation of alpha chains at Lys-40 is found in mitotic microtubules and is required for normal mitosis and cytokinesis contributing to genomic stability.</text>
</comment>
<comment type="PTM">
    <text evidence="7">Nitration of Tyr-450 is irreversible and interferes with normal dynein intracellular distribution.</text>
</comment>
<comment type="PTM">
    <text evidence="9 11 12 13">Undergoes a tyrosination/detyrosination cycle, the cyclic removal and re-addition of a C-terminal tyrosine residue by the enzymes tubulin tyrosine carboxypeptidase (MATCAP1/KIAA0895L, VASH1 or VASH2) and tubulin tyrosine ligase (TTL), respectively.</text>
</comment>
<comment type="PTM">
    <molecule>Tubulin alpha-3C chain</molecule>
    <text evidence="4 7 11">Tyrosination promotes microtubule interaction with CAP-Gly domain-containing proteins such as CLIP1, CLIP2 and DCTN1 (By similarity). Tyrosination regulates the initiation of dynein-dynactin motility via interaction with DCTN1, which brings the dynein-dynactin complex into contact with microtubules (PubMed:26972003). In neurons, tyrosinated tubulins mediate the initiation of retrograde vesicle transport (By similarity).</text>
</comment>
<comment type="PTM">
    <molecule>Detyrosinated tubulin alpha-3C chain</molecule>
    <text evidence="1 9">Detyrosination is involved in metaphase plate congression by guiding chromosomes during mitosis: detyrosination promotes interaction with CENPE, promoting pole-proximal transport of chromosomes toward the equator (PubMed:25908662). Detyrosination increases microtubules-dependent mechanotransduction in dystrophic cardiac and skeletal muscle. In cardiomyocytes, detyrosinated microtubules are required to resist to contractile compression during contraction: detyrosination promotes association with desmin (DES) at force-generating sarcomeres, leading to buckled microtubules and mechanical resistance to contraction (By similarity).</text>
</comment>
<comment type="similarity">
    <text evidence="16">Belongs to the tubulin family.</text>
</comment>
<comment type="online information" name="Wikipedia">
    <link uri="https://en.wikipedia.org/wiki/Tubulin"/>
    <text>Tubulin entry</text>
</comment>
<reference key="1">
    <citation type="journal article" date="1998" name="Genomics">
        <title>Sequence characterization of a newly identified human alpha-tubulin gene (TUBA2).</title>
        <authorList>
            <person name="Dode C."/>
            <person name="Weil D."/>
            <person name="Levilliers J."/>
            <person name="Crozet F."/>
            <person name="Chaib H."/>
            <person name="Levi-Acobas F."/>
            <person name="Guilford P."/>
            <person name="Petit C."/>
        </authorList>
    </citation>
    <scope>NUCLEOTIDE SEQUENCE [GENOMIC DNA] (ISOFORM 1)</scope>
</reference>
<reference key="2">
    <citation type="journal article" date="2004" name="Nature">
        <title>The DNA sequence and analysis of human chromosome 13.</title>
        <authorList>
            <person name="Dunham A."/>
            <person name="Matthews L.H."/>
            <person name="Burton J."/>
            <person name="Ashurst J.L."/>
            <person name="Howe K.L."/>
            <person name="Ashcroft K.J."/>
            <person name="Beare D.M."/>
            <person name="Burford D.C."/>
            <person name="Hunt S.E."/>
            <person name="Griffiths-Jones S."/>
            <person name="Jones M.C."/>
            <person name="Keenan S.J."/>
            <person name="Oliver K."/>
            <person name="Scott C.E."/>
            <person name="Ainscough R."/>
            <person name="Almeida J.P."/>
            <person name="Ambrose K.D."/>
            <person name="Andrews D.T."/>
            <person name="Ashwell R.I.S."/>
            <person name="Babbage A.K."/>
            <person name="Bagguley C.L."/>
            <person name="Bailey J."/>
            <person name="Bannerjee R."/>
            <person name="Barlow K.F."/>
            <person name="Bates K."/>
            <person name="Beasley H."/>
            <person name="Bird C.P."/>
            <person name="Bray-Allen S."/>
            <person name="Brown A.J."/>
            <person name="Brown J.Y."/>
            <person name="Burrill W."/>
            <person name="Carder C."/>
            <person name="Carter N.P."/>
            <person name="Chapman J.C."/>
            <person name="Clamp M.E."/>
            <person name="Clark S.Y."/>
            <person name="Clarke G."/>
            <person name="Clee C.M."/>
            <person name="Clegg S.C."/>
            <person name="Cobley V."/>
            <person name="Collins J.E."/>
            <person name="Corby N."/>
            <person name="Coville G.J."/>
            <person name="Deloukas P."/>
            <person name="Dhami P."/>
            <person name="Dunham I."/>
            <person name="Dunn M."/>
            <person name="Earthrowl M.E."/>
            <person name="Ellington A.G."/>
            <person name="Faulkner L."/>
            <person name="Frankish A.G."/>
            <person name="Frankland J."/>
            <person name="French L."/>
            <person name="Garner P."/>
            <person name="Garnett J."/>
            <person name="Gilbert J.G.R."/>
            <person name="Gilson C.J."/>
            <person name="Ghori J."/>
            <person name="Grafham D.V."/>
            <person name="Gribble S.M."/>
            <person name="Griffiths C."/>
            <person name="Hall R.E."/>
            <person name="Hammond S."/>
            <person name="Harley J.L."/>
            <person name="Hart E.A."/>
            <person name="Heath P.D."/>
            <person name="Howden P.J."/>
            <person name="Huckle E.J."/>
            <person name="Hunt P.J."/>
            <person name="Hunt A.R."/>
            <person name="Johnson C."/>
            <person name="Johnson D."/>
            <person name="Kay M."/>
            <person name="Kimberley A.M."/>
            <person name="King A."/>
            <person name="Laird G.K."/>
            <person name="Langford C.J."/>
            <person name="Lawlor S."/>
            <person name="Leongamornlert D.A."/>
            <person name="Lloyd D.M."/>
            <person name="Lloyd C."/>
            <person name="Loveland J.E."/>
            <person name="Lovell J."/>
            <person name="Martin S."/>
            <person name="Mashreghi-Mohammadi M."/>
            <person name="McLaren S.J."/>
            <person name="McMurray A."/>
            <person name="Milne S."/>
            <person name="Moore M.J.F."/>
            <person name="Nickerson T."/>
            <person name="Palmer S.A."/>
            <person name="Pearce A.V."/>
            <person name="Peck A.I."/>
            <person name="Pelan S."/>
            <person name="Phillimore B."/>
            <person name="Porter K.M."/>
            <person name="Rice C.M."/>
            <person name="Searle S."/>
            <person name="Sehra H.K."/>
            <person name="Shownkeen R."/>
            <person name="Skuce C.D."/>
            <person name="Smith M."/>
            <person name="Steward C.A."/>
            <person name="Sycamore N."/>
            <person name="Tester J."/>
            <person name="Thomas D.W."/>
            <person name="Tracey A."/>
            <person name="Tromans A."/>
            <person name="Tubby B."/>
            <person name="Wall M."/>
            <person name="Wallis J.M."/>
            <person name="West A.P."/>
            <person name="Whitehead S.L."/>
            <person name="Willey D.L."/>
            <person name="Wilming L."/>
            <person name="Wray P.W."/>
            <person name="Wright M.W."/>
            <person name="Young L."/>
            <person name="Coulson A."/>
            <person name="Durbin R.M."/>
            <person name="Hubbard T."/>
            <person name="Sulston J.E."/>
            <person name="Beck S."/>
            <person name="Bentley D.R."/>
            <person name="Rogers J."/>
            <person name="Ross M.T."/>
        </authorList>
    </citation>
    <scope>NUCLEOTIDE SEQUENCE [LARGE SCALE GENOMIC DNA]</scope>
</reference>
<reference key="3">
    <citation type="submission" date="2005-07" db="EMBL/GenBank/DDBJ databases">
        <authorList>
            <person name="Mural R.J."/>
            <person name="Istrail S."/>
            <person name="Sutton G.G."/>
            <person name="Florea L."/>
            <person name="Halpern A.L."/>
            <person name="Mobarry C.M."/>
            <person name="Lippert R."/>
            <person name="Walenz B."/>
            <person name="Shatkay H."/>
            <person name="Dew I."/>
            <person name="Miller J.R."/>
            <person name="Flanigan M.J."/>
            <person name="Edwards N.J."/>
            <person name="Bolanos R."/>
            <person name="Fasulo D."/>
            <person name="Halldorsson B.V."/>
            <person name="Hannenhalli S."/>
            <person name="Turner R."/>
            <person name="Yooseph S."/>
            <person name="Lu F."/>
            <person name="Nusskern D.R."/>
            <person name="Shue B.C."/>
            <person name="Zheng X.H."/>
            <person name="Zhong F."/>
            <person name="Delcher A.L."/>
            <person name="Huson D.H."/>
            <person name="Kravitz S.A."/>
            <person name="Mouchard L."/>
            <person name="Reinert K."/>
            <person name="Remington K.A."/>
            <person name="Clark A.G."/>
            <person name="Waterman M.S."/>
            <person name="Eichler E.E."/>
            <person name="Adams M.D."/>
            <person name="Hunkapiller M.W."/>
            <person name="Myers E.W."/>
            <person name="Venter J.C."/>
        </authorList>
    </citation>
    <scope>NUCLEOTIDE SEQUENCE [LARGE SCALE GENOMIC DNA]</scope>
</reference>
<reference key="4">
    <citation type="journal article" date="2004" name="Genome Res.">
        <title>The status, quality, and expansion of the NIH full-length cDNA project: the Mammalian Gene Collection (MGC).</title>
        <authorList>
            <consortium name="The MGC Project Team"/>
        </authorList>
    </citation>
    <scope>NUCLEOTIDE SEQUENCE [LARGE SCALE MRNA] (ISOFORM 2)</scope>
    <source>
        <tissue>Skin</tissue>
    </source>
</reference>
<reference key="5">
    <citation type="submission" date="1993-07" db="EMBL/GenBank/DDBJ databases">
        <title>The alpha-tubulin gene on chromosome 13 (TUBA2) encodes a testis-specific isotype.</title>
        <authorList>
            <person name="Bonaldo M."/>
            <person name="Su L."/>
            <person name="Lawton L.N."/>
            <person name="Soares M.B."/>
        </authorList>
    </citation>
    <scope>NUCLEOTIDE SEQUENCE [MRNA] OF 352-449 (ISOFORM 1)</scope>
    <scope>TISSUE SPECIFICITY</scope>
</reference>
<reference key="6">
    <citation type="journal article" date="2009" name="Cell">
        <title>Evolutionary divergence of enzymatic mechanisms for posttranslational polyglycylation.</title>
        <authorList>
            <person name="Rogowski K."/>
            <person name="Juge F."/>
            <person name="van Dijk J."/>
            <person name="Wloga D."/>
            <person name="Strub J.-M."/>
            <person name="Levilliers N."/>
            <person name="Thomas D."/>
            <person name="Bre M.-H."/>
            <person name="Van Dorsselaer A."/>
            <person name="Gaertig J."/>
            <person name="Janke C."/>
        </authorList>
    </citation>
    <scope>GLYCYLATION</scope>
</reference>
<reference key="7">
    <citation type="journal article" date="2014" name="Cell">
        <title>Molecular basis for age-dependent microtubule acetylation by tubulin acetyltransferase.</title>
        <authorList>
            <person name="Szyk A."/>
            <person name="Deaconescu A.M."/>
            <person name="Spector J."/>
            <person name="Goodman B."/>
            <person name="Valenstein M.L."/>
            <person name="Ziolkowska N.E."/>
            <person name="Kormendi V."/>
            <person name="Grigorieff N."/>
            <person name="Roll-Mecak A."/>
        </authorList>
    </citation>
    <scope>ACETYLATION AT LYS-40</scope>
</reference>
<reference key="8">
    <citation type="journal article" date="2015" name="Science">
        <title>Mitosis. Microtubule detyrosination guides chromosomes during mitosis.</title>
        <authorList>
            <person name="Barisic M."/>
            <person name="Silva e Sousa R."/>
            <person name="Tripathy S.K."/>
            <person name="Magiera M.M."/>
            <person name="Zaytsev A.V."/>
            <person name="Pereira A.L."/>
            <person name="Janke C."/>
            <person name="Grishchuk E.L."/>
            <person name="Maiato H."/>
        </authorList>
    </citation>
    <scope>DETYROSINATION</scope>
</reference>
<reference key="9">
    <citation type="journal article" date="2016" name="Cell">
        <title>Graded control of microtubule severing by tubulin glutamylation.</title>
        <authorList>
            <person name="Valenstein M.L."/>
            <person name="Roll-Mecak A."/>
        </authorList>
    </citation>
    <scope>GLUTAMYLATION</scope>
</reference>
<reference key="10">
    <citation type="journal article" date="2016" name="Cell Rep.">
        <title>Alpha-tubulin tyrosination and CLIP-170 phosphorylation regulate the initiation of dynein-driven transport in neurons.</title>
        <authorList>
            <person name="Nirschl J.J."/>
            <person name="Magiera M.M."/>
            <person name="Lazarus J.E."/>
            <person name="Janke C."/>
            <person name="Holzbaur E.L."/>
        </authorList>
    </citation>
    <scope>TYROSINATION</scope>
</reference>
<reference key="11">
    <citation type="journal article" date="2017" name="Science">
        <title>Vasohibins encode tubulin detyrosinating activity.</title>
        <authorList>
            <person name="Nieuwenhuis J."/>
            <person name="Adamopoulos A."/>
            <person name="Bleijerveld O.B."/>
            <person name="Mazouzi A."/>
            <person name="Stickel E."/>
            <person name="Celie P."/>
            <person name="Altelaar M."/>
            <person name="Knipscheer P."/>
            <person name="Perrakis A."/>
            <person name="Blomen V.A."/>
            <person name="Brummelkamp T.R."/>
        </authorList>
    </citation>
    <scope>DETYROSINATION</scope>
</reference>
<reference key="12">
    <citation type="journal article" date="2022" name="Science">
        <title>Posttranslational modification of microtubules by the MATCAP detyrosinase.</title>
        <authorList>
            <person name="Landskron L."/>
            <person name="Bak J."/>
            <person name="Adamopoulos A."/>
            <person name="Kaplani K."/>
            <person name="Moraiti M."/>
            <person name="van den Hengel L.G."/>
            <person name="Song J.Y."/>
            <person name="Bleijerveld O.B."/>
            <person name="Nieuwenhuis J."/>
            <person name="Heidebrecht T."/>
            <person name="Henneman L."/>
            <person name="Moutin M.J."/>
            <person name="Barisic M."/>
            <person name="Taraviras S."/>
            <person name="Perrakis A."/>
            <person name="Brummelkamp T.R."/>
        </authorList>
    </citation>
    <scope>DETYROSINATION</scope>
</reference>
<organism>
    <name type="scientific">Homo sapiens</name>
    <name type="common">Human</name>
    <dbReference type="NCBI Taxonomy" id="9606"/>
    <lineage>
        <taxon>Eukaryota</taxon>
        <taxon>Metazoa</taxon>
        <taxon>Chordata</taxon>
        <taxon>Craniata</taxon>
        <taxon>Vertebrata</taxon>
        <taxon>Euteleostomi</taxon>
        <taxon>Mammalia</taxon>
        <taxon>Eutheria</taxon>
        <taxon>Euarchontoglires</taxon>
        <taxon>Primates</taxon>
        <taxon>Haplorrhini</taxon>
        <taxon>Catarrhini</taxon>
        <taxon>Hominidae</taxon>
        <taxon>Homo</taxon>
    </lineage>
</organism>
<keyword id="KW-0007">Acetylation</keyword>
<keyword id="KW-0025">Alternative splicing</keyword>
<keyword id="KW-0963">Cytoplasm</keyword>
<keyword id="KW-0206">Cytoskeleton</keyword>
<keyword id="KW-0342">GTP-binding</keyword>
<keyword id="KW-0378">Hydrolase</keyword>
<keyword id="KW-1017">Isopeptide bond</keyword>
<keyword id="KW-0460">Magnesium</keyword>
<keyword id="KW-0479">Metal-binding</keyword>
<keyword id="KW-0488">Methylation</keyword>
<keyword id="KW-0493">Microtubule</keyword>
<keyword id="KW-0944">Nitration</keyword>
<keyword id="KW-0547">Nucleotide-binding</keyword>
<keyword id="KW-0597">Phosphoprotein</keyword>
<keyword id="KW-1185">Reference proteome</keyword>
<accession>P0DPH7</accession>
<accession>A6NJQ0</accession>
<accession>Q13748</accession>
<accession>Q5W099</accession>
<accession>Q6PEY3</accession>
<accession>Q96F18</accession>